<comment type="function">
    <text evidence="1">Provides the (R)-glutamate required for cell wall biosynthesis.</text>
</comment>
<comment type="catalytic activity">
    <reaction evidence="1">
        <text>L-glutamate = D-glutamate</text>
        <dbReference type="Rhea" id="RHEA:12813"/>
        <dbReference type="ChEBI" id="CHEBI:29985"/>
        <dbReference type="ChEBI" id="CHEBI:29986"/>
        <dbReference type="EC" id="5.1.1.3"/>
    </reaction>
</comment>
<comment type="pathway">
    <text evidence="1">Cell wall biogenesis; peptidoglycan biosynthesis.</text>
</comment>
<comment type="similarity">
    <text evidence="1">Belongs to the aspartate/glutamate racemases family.</text>
</comment>
<name>MURI_CAUSK</name>
<feature type="chain" id="PRO_1000078556" description="Glutamate racemase">
    <location>
        <begin position="1"/>
        <end position="283"/>
    </location>
</feature>
<feature type="active site" description="Proton donor/acceptor" evidence="1">
    <location>
        <position position="70"/>
    </location>
</feature>
<feature type="active site" description="Proton donor/acceptor" evidence="1">
    <location>
        <position position="206"/>
    </location>
</feature>
<feature type="binding site" evidence="1">
    <location>
        <begin position="7"/>
        <end position="8"/>
    </location>
    <ligand>
        <name>substrate</name>
    </ligand>
</feature>
<feature type="binding site" evidence="1">
    <location>
        <begin position="39"/>
        <end position="40"/>
    </location>
    <ligand>
        <name>substrate</name>
    </ligand>
</feature>
<feature type="binding site" evidence="1">
    <location>
        <begin position="71"/>
        <end position="72"/>
    </location>
    <ligand>
        <name>substrate</name>
    </ligand>
</feature>
<feature type="binding site" evidence="1">
    <location>
        <begin position="207"/>
        <end position="208"/>
    </location>
    <ligand>
        <name>substrate</name>
    </ligand>
</feature>
<reference key="1">
    <citation type="submission" date="2008-01" db="EMBL/GenBank/DDBJ databases">
        <title>Complete sequence of chromosome of Caulobacter sp. K31.</title>
        <authorList>
            <consortium name="US DOE Joint Genome Institute"/>
            <person name="Copeland A."/>
            <person name="Lucas S."/>
            <person name="Lapidus A."/>
            <person name="Barry K."/>
            <person name="Glavina del Rio T."/>
            <person name="Dalin E."/>
            <person name="Tice H."/>
            <person name="Pitluck S."/>
            <person name="Bruce D."/>
            <person name="Goodwin L."/>
            <person name="Thompson L.S."/>
            <person name="Brettin T."/>
            <person name="Detter J.C."/>
            <person name="Han C."/>
            <person name="Schmutz J."/>
            <person name="Larimer F."/>
            <person name="Land M."/>
            <person name="Hauser L."/>
            <person name="Kyrpides N."/>
            <person name="Kim E."/>
            <person name="Stephens C."/>
            <person name="Richardson P."/>
        </authorList>
    </citation>
    <scope>NUCLEOTIDE SEQUENCE [LARGE SCALE GENOMIC DNA]</scope>
    <source>
        <strain>K31</strain>
    </source>
</reference>
<dbReference type="EC" id="5.1.1.3" evidence="1"/>
<dbReference type="EMBL" id="CP000927">
    <property type="protein sequence ID" value="ABZ73995.1"/>
    <property type="molecule type" value="Genomic_DNA"/>
</dbReference>
<dbReference type="SMR" id="B0T549"/>
<dbReference type="STRING" id="366602.Caul_4875"/>
<dbReference type="KEGG" id="cak:Caul_4875"/>
<dbReference type="eggNOG" id="COG0796">
    <property type="taxonomic scope" value="Bacteria"/>
</dbReference>
<dbReference type="HOGENOM" id="CLU_052344_0_3_5"/>
<dbReference type="OrthoDB" id="9801055at2"/>
<dbReference type="UniPathway" id="UPA00219"/>
<dbReference type="GO" id="GO:0008881">
    <property type="term" value="F:glutamate racemase activity"/>
    <property type="evidence" value="ECO:0007669"/>
    <property type="project" value="UniProtKB-UniRule"/>
</dbReference>
<dbReference type="GO" id="GO:0071555">
    <property type="term" value="P:cell wall organization"/>
    <property type="evidence" value="ECO:0007669"/>
    <property type="project" value="UniProtKB-KW"/>
</dbReference>
<dbReference type="GO" id="GO:0009252">
    <property type="term" value="P:peptidoglycan biosynthetic process"/>
    <property type="evidence" value="ECO:0007669"/>
    <property type="project" value="UniProtKB-UniRule"/>
</dbReference>
<dbReference type="GO" id="GO:0008360">
    <property type="term" value="P:regulation of cell shape"/>
    <property type="evidence" value="ECO:0007669"/>
    <property type="project" value="UniProtKB-KW"/>
</dbReference>
<dbReference type="Gene3D" id="3.40.50.1860">
    <property type="match status" value="2"/>
</dbReference>
<dbReference type="HAMAP" id="MF_00258">
    <property type="entry name" value="Glu_racemase"/>
    <property type="match status" value="1"/>
</dbReference>
<dbReference type="InterPro" id="IPR015942">
    <property type="entry name" value="Asp/Glu/hydantoin_racemase"/>
</dbReference>
<dbReference type="InterPro" id="IPR001920">
    <property type="entry name" value="Asp/Glu_race"/>
</dbReference>
<dbReference type="InterPro" id="IPR018187">
    <property type="entry name" value="Asp/Glu_racemase_AS_1"/>
</dbReference>
<dbReference type="InterPro" id="IPR004391">
    <property type="entry name" value="Glu_race"/>
</dbReference>
<dbReference type="PANTHER" id="PTHR21198">
    <property type="entry name" value="GLUTAMATE RACEMASE"/>
    <property type="match status" value="1"/>
</dbReference>
<dbReference type="PANTHER" id="PTHR21198:SF2">
    <property type="entry name" value="GLUTAMATE RACEMASE"/>
    <property type="match status" value="1"/>
</dbReference>
<dbReference type="Pfam" id="PF01177">
    <property type="entry name" value="Asp_Glu_race"/>
    <property type="match status" value="1"/>
</dbReference>
<dbReference type="SUPFAM" id="SSF53681">
    <property type="entry name" value="Aspartate/glutamate racemase"/>
    <property type="match status" value="2"/>
</dbReference>
<dbReference type="PROSITE" id="PS00923">
    <property type="entry name" value="ASP_GLU_RACEMASE_1"/>
    <property type="match status" value="1"/>
</dbReference>
<accession>B0T549</accession>
<gene>
    <name evidence="1" type="primary">murI</name>
    <name type="ordered locus">Caul_4875</name>
</gene>
<organism>
    <name type="scientific">Caulobacter sp. (strain K31)</name>
    <dbReference type="NCBI Taxonomy" id="366602"/>
    <lineage>
        <taxon>Bacteria</taxon>
        <taxon>Pseudomonadati</taxon>
        <taxon>Pseudomonadota</taxon>
        <taxon>Alphaproteobacteria</taxon>
        <taxon>Caulobacterales</taxon>
        <taxon>Caulobacteraceae</taxon>
        <taxon>Caulobacter</taxon>
    </lineage>
</organism>
<proteinExistence type="inferred from homology"/>
<protein>
    <recommendedName>
        <fullName evidence="1">Glutamate racemase</fullName>
        <ecNumber evidence="1">5.1.1.3</ecNumber>
    </recommendedName>
</protein>
<evidence type="ECO:0000255" key="1">
    <source>
        <dbReference type="HAMAP-Rule" id="MF_00258"/>
    </source>
</evidence>
<keyword id="KW-0133">Cell shape</keyword>
<keyword id="KW-0961">Cell wall biogenesis/degradation</keyword>
<keyword id="KW-0413">Isomerase</keyword>
<keyword id="KW-0573">Peptidoglycan synthesis</keyword>
<sequence length="283" mass="30529">MSIGVFDSGVGGLTVHRALVNRLPQADFIYLADQANAPYGGRPGEEIVALTRAGCERLFDAGASLVVLACNTASAIALRRLQQTWLPGYRKALGRPINVLGIIVPTIEAATGLPWEHEAERRGEKVEQLDILGVFSTPGTAASRVYEIEIDKRRQDVAVFSEPCPNLARMIEAGAGAVELATEVERHVQQLKTRIGRYPDRAILGCTHYEIIADLFRAALPAGTPLIHQPASTADALELYFQRHPELDPGTGGGRVFLTTGTPGPQNALVETFWGGPLRFEAA</sequence>